<comment type="function">
    <text evidence="1">One of the enzymes of the urea cycle, the metabolic pathway transforming neurotoxic amonia produced by protein catabolism into inocuous urea in the liver of ureotelic animals. Catalyzes the formation of arginosuccinate from aspartate, citrulline and ATP and together with ASL it is responsible for the biosynthesis of arginine in most body tissues.</text>
</comment>
<comment type="catalytic activity">
    <reaction evidence="1">
        <text>L-citrulline + L-aspartate + ATP = 2-(N(omega)-L-arginino)succinate + AMP + diphosphate + H(+)</text>
        <dbReference type="Rhea" id="RHEA:10932"/>
        <dbReference type="ChEBI" id="CHEBI:15378"/>
        <dbReference type="ChEBI" id="CHEBI:29991"/>
        <dbReference type="ChEBI" id="CHEBI:30616"/>
        <dbReference type="ChEBI" id="CHEBI:33019"/>
        <dbReference type="ChEBI" id="CHEBI:57472"/>
        <dbReference type="ChEBI" id="CHEBI:57743"/>
        <dbReference type="ChEBI" id="CHEBI:456215"/>
        <dbReference type="EC" id="6.3.4.5"/>
    </reaction>
</comment>
<comment type="pathway">
    <text evidence="1">Amino-acid biosynthesis; L-arginine biosynthesis; L-arginine from L-ornithine and carbamoyl phosphate: step 2/3.</text>
</comment>
<comment type="pathway">
    <text evidence="1">Nitrogen metabolism; urea cycle; (N(omega)-L-arginino)succinate from L-aspartate and L-citrulline: step 1/1.</text>
</comment>
<comment type="subunit">
    <text evidence="1">Homotetramer.</text>
</comment>
<comment type="subcellular location">
    <subcellularLocation>
        <location evidence="1">Cytoplasm</location>
        <location evidence="1">Cytosol</location>
    </subcellularLocation>
</comment>
<comment type="similarity">
    <text evidence="2">Belongs to the argininosuccinate synthase family.</text>
</comment>
<dbReference type="EC" id="6.3.4.5" evidence="1"/>
<dbReference type="EMBL" id="BC081578">
    <property type="protein sequence ID" value="AAH81578.1"/>
    <property type="molecule type" value="mRNA"/>
</dbReference>
<dbReference type="EMBL" id="BC154282">
    <property type="protein sequence ID" value="AAI54283.1"/>
    <property type="molecule type" value="mRNA"/>
</dbReference>
<dbReference type="RefSeq" id="NP_001004603.1">
    <property type="nucleotide sequence ID" value="NM_001004603.1"/>
</dbReference>
<dbReference type="SMR" id="Q66I24"/>
<dbReference type="FunCoup" id="Q66I24">
    <property type="interactions" value="1221"/>
</dbReference>
<dbReference type="STRING" id="7955.ENSDARP00000140635"/>
<dbReference type="PaxDb" id="7955-ENSDARP00000039902"/>
<dbReference type="GeneID" id="447864"/>
<dbReference type="KEGG" id="dre:447864"/>
<dbReference type="AGR" id="ZFIN:ZDB-GENE-040912-178"/>
<dbReference type="CTD" id="445"/>
<dbReference type="ZFIN" id="ZDB-GENE-040912-178">
    <property type="gene designation" value="ass1"/>
</dbReference>
<dbReference type="eggNOG" id="KOG1706">
    <property type="taxonomic scope" value="Eukaryota"/>
</dbReference>
<dbReference type="InParanoid" id="Q66I24"/>
<dbReference type="OrthoDB" id="1688907at2759"/>
<dbReference type="PhylomeDB" id="Q66I24"/>
<dbReference type="UniPathway" id="UPA00068">
    <property type="reaction ID" value="UER00113"/>
</dbReference>
<dbReference type="UniPathway" id="UPA00158">
    <property type="reaction ID" value="UER00272"/>
</dbReference>
<dbReference type="PRO" id="PR:Q66I24"/>
<dbReference type="Proteomes" id="UP000000437">
    <property type="component" value="Unplaced"/>
</dbReference>
<dbReference type="GO" id="GO:0005737">
    <property type="term" value="C:cytoplasm"/>
    <property type="evidence" value="ECO:0000318"/>
    <property type="project" value="GO_Central"/>
</dbReference>
<dbReference type="GO" id="GO:0005829">
    <property type="term" value="C:cytosol"/>
    <property type="evidence" value="ECO:0007669"/>
    <property type="project" value="UniProtKB-SubCell"/>
</dbReference>
<dbReference type="GO" id="GO:0004055">
    <property type="term" value="F:argininosuccinate synthase activity"/>
    <property type="evidence" value="ECO:0000250"/>
    <property type="project" value="UniProtKB"/>
</dbReference>
<dbReference type="GO" id="GO:0005524">
    <property type="term" value="F:ATP binding"/>
    <property type="evidence" value="ECO:0007669"/>
    <property type="project" value="UniProtKB-KW"/>
</dbReference>
<dbReference type="GO" id="GO:0000053">
    <property type="term" value="P:argininosuccinate metabolic process"/>
    <property type="evidence" value="ECO:0000318"/>
    <property type="project" value="GO_Central"/>
</dbReference>
<dbReference type="GO" id="GO:0006526">
    <property type="term" value="P:L-arginine biosynthetic process"/>
    <property type="evidence" value="ECO:0000250"/>
    <property type="project" value="UniProtKB"/>
</dbReference>
<dbReference type="GO" id="GO:0000050">
    <property type="term" value="P:urea cycle"/>
    <property type="evidence" value="ECO:0000250"/>
    <property type="project" value="UniProtKB"/>
</dbReference>
<dbReference type="CDD" id="cd01999">
    <property type="entry name" value="ASS"/>
    <property type="match status" value="1"/>
</dbReference>
<dbReference type="FunFam" id="3.40.50.620:FF:000019">
    <property type="entry name" value="Argininosuccinate synthase"/>
    <property type="match status" value="1"/>
</dbReference>
<dbReference type="FunFam" id="3.90.1260.10:FF:000005">
    <property type="entry name" value="Argininosuccinate synthase 1"/>
    <property type="match status" value="1"/>
</dbReference>
<dbReference type="Gene3D" id="3.90.1260.10">
    <property type="entry name" value="Argininosuccinate synthetase, chain A, domain 2"/>
    <property type="match status" value="1"/>
</dbReference>
<dbReference type="Gene3D" id="3.40.50.620">
    <property type="entry name" value="HUPs"/>
    <property type="match status" value="1"/>
</dbReference>
<dbReference type="Gene3D" id="1.20.5.470">
    <property type="entry name" value="Single helix bin"/>
    <property type="match status" value="1"/>
</dbReference>
<dbReference type="HAMAP" id="MF_00005">
    <property type="entry name" value="Arg_succ_synth_type1"/>
    <property type="match status" value="1"/>
</dbReference>
<dbReference type="InterPro" id="IPR048268">
    <property type="entry name" value="Arginosuc_syn_C"/>
</dbReference>
<dbReference type="InterPro" id="IPR048267">
    <property type="entry name" value="Arginosuc_syn_N"/>
</dbReference>
<dbReference type="InterPro" id="IPR001518">
    <property type="entry name" value="Arginosuc_synth"/>
</dbReference>
<dbReference type="InterPro" id="IPR018223">
    <property type="entry name" value="Arginosuc_synth_CS"/>
</dbReference>
<dbReference type="InterPro" id="IPR023434">
    <property type="entry name" value="Arginosuc_synth_type_1_subfam"/>
</dbReference>
<dbReference type="InterPro" id="IPR024074">
    <property type="entry name" value="AS_cat/multimer_dom_body"/>
</dbReference>
<dbReference type="InterPro" id="IPR014729">
    <property type="entry name" value="Rossmann-like_a/b/a_fold"/>
</dbReference>
<dbReference type="NCBIfam" id="TIGR00032">
    <property type="entry name" value="argG"/>
    <property type="match status" value="1"/>
</dbReference>
<dbReference type="NCBIfam" id="NF001770">
    <property type="entry name" value="PRK00509.1"/>
    <property type="match status" value="1"/>
</dbReference>
<dbReference type="PANTHER" id="PTHR11587">
    <property type="entry name" value="ARGININOSUCCINATE SYNTHASE"/>
    <property type="match status" value="1"/>
</dbReference>
<dbReference type="PANTHER" id="PTHR11587:SF2">
    <property type="entry name" value="ARGININOSUCCINATE SYNTHASE"/>
    <property type="match status" value="1"/>
</dbReference>
<dbReference type="Pfam" id="PF20979">
    <property type="entry name" value="Arginosuc_syn_C"/>
    <property type="match status" value="1"/>
</dbReference>
<dbReference type="Pfam" id="PF00764">
    <property type="entry name" value="Arginosuc_synth"/>
    <property type="match status" value="1"/>
</dbReference>
<dbReference type="SUPFAM" id="SSF52402">
    <property type="entry name" value="Adenine nucleotide alpha hydrolases-like"/>
    <property type="match status" value="1"/>
</dbReference>
<dbReference type="SUPFAM" id="SSF69864">
    <property type="entry name" value="Argininosuccinate synthetase, C-terminal domain"/>
    <property type="match status" value="1"/>
</dbReference>
<dbReference type="PROSITE" id="PS00564">
    <property type="entry name" value="ARGININOSUCCIN_SYN_1"/>
    <property type="match status" value="1"/>
</dbReference>
<dbReference type="PROSITE" id="PS00565">
    <property type="entry name" value="ARGININOSUCCIN_SYN_2"/>
    <property type="match status" value="1"/>
</dbReference>
<accession>Q66I24</accession>
<sequence length="414" mass="47129">MSKGLVVLAYSGGLDTSCILVWLKEQGYDVIAYLANIGQDEDFDVARKKAEKLGAKKVFIEDLRSEFVQEFIWPALQANALYEDRYLLGTSIARPCIARRQVQIAQREGAQYVSHGATGKGNDQVRFELTCYALYPQVQVIAPWRIPEFYNRFRGRKDLMEYAEKHNIPVPVTPKAPWSMDANLMHISYESGILENPKNHAPSDLYQMTKNPEHSPDQADMLEIEFKKGVPVRVSHLKDGISKETPLEIFCYLNEIGGKHGVGRIDIVENRFIGMKSRGIYETPGGTVLLQAHLDIETFTMDREVRKIKQSLGIKFSELIYNGFWFSPECEFVRECVERSQKHVEGRVQLSVYKGQVYILGRESPKSLYNEELVSMDVQGDYDPCDASGFIKINAVRLREHNRLQGAALSKHNV</sequence>
<reference key="1">
    <citation type="submission" date="2007-10" db="EMBL/GenBank/DDBJ databases">
        <authorList>
            <consortium name="NIH - Zebrafish Gene Collection (ZGC) project"/>
        </authorList>
    </citation>
    <scope>NUCLEOTIDE SEQUENCE [LARGE SCALE MRNA]</scope>
</reference>
<feature type="chain" id="PRO_0000321323" description="Argininosuccinate synthase">
    <location>
        <begin position="1"/>
        <end position="414"/>
    </location>
</feature>
<feature type="binding site" evidence="1">
    <location>
        <begin position="9"/>
        <end position="17"/>
    </location>
    <ligand>
        <name>ATP</name>
        <dbReference type="ChEBI" id="CHEBI:30616"/>
    </ligand>
</feature>
<feature type="binding site" evidence="1">
    <location>
        <position position="35"/>
    </location>
    <ligand>
        <name>ATP</name>
        <dbReference type="ChEBI" id="CHEBI:30616"/>
    </ligand>
</feature>
<feature type="binding site" evidence="1">
    <location>
        <position position="86"/>
    </location>
    <ligand>
        <name>L-citrulline</name>
        <dbReference type="ChEBI" id="CHEBI:57743"/>
    </ligand>
</feature>
<feature type="binding site" evidence="1">
    <location>
        <position position="91"/>
    </location>
    <ligand>
        <name>L-citrulline</name>
        <dbReference type="ChEBI" id="CHEBI:57743"/>
    </ligand>
</feature>
<feature type="binding site" evidence="1">
    <location>
        <begin position="114"/>
        <end position="122"/>
    </location>
    <ligand>
        <name>ATP</name>
        <dbReference type="ChEBI" id="CHEBI:30616"/>
    </ligand>
</feature>
<feature type="binding site" evidence="1">
    <location>
        <position position="118"/>
    </location>
    <ligand>
        <name>L-aspartate</name>
        <dbReference type="ChEBI" id="CHEBI:29991"/>
    </ligand>
</feature>
<feature type="binding site" evidence="1">
    <location>
        <position position="122"/>
    </location>
    <ligand>
        <name>L-aspartate</name>
        <dbReference type="ChEBI" id="CHEBI:29991"/>
    </ligand>
</feature>
<feature type="binding site" evidence="1">
    <location>
        <position position="122"/>
    </location>
    <ligand>
        <name>L-citrulline</name>
        <dbReference type="ChEBI" id="CHEBI:57743"/>
    </ligand>
</feature>
<feature type="binding site" evidence="1">
    <location>
        <position position="123"/>
    </location>
    <ligand>
        <name>L-aspartate</name>
        <dbReference type="ChEBI" id="CHEBI:29991"/>
    </ligand>
</feature>
<feature type="binding site" evidence="1">
    <location>
        <position position="126"/>
    </location>
    <ligand>
        <name>L-citrulline</name>
        <dbReference type="ChEBI" id="CHEBI:57743"/>
    </ligand>
</feature>
<feature type="binding site" evidence="1">
    <location>
        <position position="179"/>
    </location>
    <ligand>
        <name>L-citrulline</name>
        <dbReference type="ChEBI" id="CHEBI:57743"/>
    </ligand>
</feature>
<feature type="binding site" evidence="1">
    <location>
        <position position="188"/>
    </location>
    <ligand>
        <name>L-citrulline</name>
        <dbReference type="ChEBI" id="CHEBI:57743"/>
    </ligand>
</feature>
<feature type="binding site" evidence="1">
    <location>
        <position position="269"/>
    </location>
    <ligand>
        <name>L-citrulline</name>
        <dbReference type="ChEBI" id="CHEBI:57743"/>
    </ligand>
</feature>
<feature type="binding site" evidence="1">
    <location>
        <position position="281"/>
    </location>
    <ligand>
        <name>L-citrulline</name>
        <dbReference type="ChEBI" id="CHEBI:57743"/>
    </ligand>
</feature>
<evidence type="ECO:0000250" key="1">
    <source>
        <dbReference type="UniProtKB" id="P00966"/>
    </source>
</evidence>
<evidence type="ECO:0000305" key="2"/>
<evidence type="ECO:0000312" key="3">
    <source>
        <dbReference type="EMBL" id="AAH81578.1"/>
    </source>
</evidence>
<organism>
    <name type="scientific">Danio rerio</name>
    <name type="common">Zebrafish</name>
    <name type="synonym">Brachydanio rerio</name>
    <dbReference type="NCBI Taxonomy" id="7955"/>
    <lineage>
        <taxon>Eukaryota</taxon>
        <taxon>Metazoa</taxon>
        <taxon>Chordata</taxon>
        <taxon>Craniata</taxon>
        <taxon>Vertebrata</taxon>
        <taxon>Euteleostomi</taxon>
        <taxon>Actinopterygii</taxon>
        <taxon>Neopterygii</taxon>
        <taxon>Teleostei</taxon>
        <taxon>Ostariophysi</taxon>
        <taxon>Cypriniformes</taxon>
        <taxon>Danionidae</taxon>
        <taxon>Danioninae</taxon>
        <taxon>Danio</taxon>
    </lineage>
</organism>
<protein>
    <recommendedName>
        <fullName evidence="2">Argininosuccinate synthase</fullName>
        <ecNumber evidence="1">6.3.4.5</ecNumber>
    </recommendedName>
    <alternativeName>
        <fullName>Citrulline--aspartate ligase</fullName>
    </alternativeName>
</protein>
<gene>
    <name evidence="1" type="primary">ass1</name>
    <name evidence="3" type="ORF">zgc:92051</name>
</gene>
<keyword id="KW-0028">Amino-acid biosynthesis</keyword>
<keyword id="KW-0055">Arginine biosynthesis</keyword>
<keyword id="KW-0067">ATP-binding</keyword>
<keyword id="KW-0963">Cytoplasm</keyword>
<keyword id="KW-0436">Ligase</keyword>
<keyword id="KW-0547">Nucleotide-binding</keyword>
<keyword id="KW-0597">Phosphoprotein</keyword>
<keyword id="KW-1185">Reference proteome</keyword>
<keyword id="KW-0835">Urea cycle</keyword>
<name>ASSY_DANRE</name>
<proteinExistence type="evidence at transcript level"/>